<evidence type="ECO:0000255" key="1">
    <source>
        <dbReference type="HAMAP-Rule" id="MF_00969"/>
    </source>
</evidence>
<evidence type="ECO:0000269" key="2">
    <source>
    </source>
</evidence>
<evidence type="ECO:0000269" key="3">
    <source>
    </source>
</evidence>
<evidence type="ECO:0000269" key="4">
    <source>
    </source>
</evidence>
<evidence type="ECO:0000269" key="5">
    <source>
    </source>
</evidence>
<evidence type="ECO:0000269" key="6">
    <source>
    </source>
</evidence>
<evidence type="ECO:0000269" key="7">
    <source>
    </source>
</evidence>
<evidence type="ECO:0000269" key="8">
    <source>
    </source>
</evidence>
<evidence type="ECO:0000269" key="9">
    <source>
    </source>
</evidence>
<evidence type="ECO:0000305" key="10"/>
<evidence type="ECO:0007829" key="11">
    <source>
        <dbReference type="PDB" id="2B2N"/>
    </source>
</evidence>
<evidence type="ECO:0007829" key="12">
    <source>
        <dbReference type="PDB" id="2EYQ"/>
    </source>
</evidence>
<evidence type="ECO:0007829" key="13">
    <source>
        <dbReference type="PDB" id="3HJH"/>
    </source>
</evidence>
<evidence type="ECO:0007829" key="14">
    <source>
        <dbReference type="PDB" id="4DFC"/>
    </source>
</evidence>
<evidence type="ECO:0007829" key="15">
    <source>
        <dbReference type="PDB" id="6X50"/>
    </source>
</evidence>
<name>MFD_ECOLI</name>
<sequence>MPEQYRYTLPVKAGEQRLLGELTGAACATLVAEIAERHAGPVVLIAPDMQNALRLHDEISQFTDQMVMNLADWETLPYDSFSPHQDIISSRLSTLYQLPTMQRGVLIVPVNTLMQRVCPHSFLHGHALVMKKGQRLSRDALRTQLDSAGYRHVDQVMEHGEYATRGALLDLFPMGSELPYRLDFFDDEIDSLRVFDVDSQRTLEEVEAINLLPAHEFPTDKAAIELFRSQWRDTFEVKRDPEHIYQQVSKGTLPAGIEYWQPLFFSEPLPPLFSYFPANTLLVNTGDLETSAERFQADTLARFENRGVDPMRPLLPPQSLWLRVDELFSELKNWPRVQLKTEHLPTKAANANLGFQKLPDLAVQAQQKAPLDALRKFLETFDGPVVFSVESEGRREALGELLARIKIAPQRIMRLDEASDRGRYLMIGAAEHGFVDTVRNLALICESDLLGERVARRRQDSRRTINPDTLIRNLAELHIGQPVVHLEHGVGRYAGMTTLEAGGITGEYLMLTYANDAKLYVPVSSLHLISRYAGGAEENAPLHKLGGDAWSRARQKAAEKVRDVAAELLDIYAQRAAKEGFAFKHDREQYQLFCDSFPFETTPDQAQAINAVLSDMCQPLAMDRLVCGDVGFGKTEVAMRAAFLAVDNHKQVAVLVPTTLLAQQHYDNFRDRFANWPVRIEMISRFRSAKEQTQILAEVAEGKIDILIGTHKLLQSDVKFKDLGLLIVDEEHRFGVRHKERIKAMRANVDILTLTATPIPRTLNMAMSGMRDLSIIATPPARRLAVKTFVREYDSMVVREAILREILRGGQVYYLYNDVENIQKAAERLAELVPEARIAIGHGQMRERELERVMNDFHHQRFNVLVCTTIIETGIDIPTANTIIIERADHFGLAQLHQLRGRVGRSHHQAYAWLLTPHPKAMTTDAQKRLEAIASLEDLGAGFALATHDLEIRGAGELLGEEQSGSMETIGFSLYMELLENAVDALKAGREPSLEDLTSQQTEVELRMPSLLPDDFIPDVNTRLSFYKRIASAKTENELEEIKVELIDRFGLLPDPARTLLDIARLRQQAQKLGIRKLEGNEKGGVIEFAEKNHVNPAWLIGLLQKQPQHYRLDGPTRLKFIQDLSERKTRIEWVRQFMRELEENAIA</sequence>
<accession>P30958</accession>
<accession>P77592</accession>
<gene>
    <name evidence="1" type="primary">mfd</name>
    <name type="ordered locus">b1114</name>
    <name type="ordered locus">JW1100</name>
</gene>
<organism>
    <name type="scientific">Escherichia coli (strain K12)</name>
    <dbReference type="NCBI Taxonomy" id="83333"/>
    <lineage>
        <taxon>Bacteria</taxon>
        <taxon>Pseudomonadati</taxon>
        <taxon>Pseudomonadota</taxon>
        <taxon>Gammaproteobacteria</taxon>
        <taxon>Enterobacterales</taxon>
        <taxon>Enterobacteriaceae</taxon>
        <taxon>Escherichia</taxon>
    </lineage>
</organism>
<proteinExistence type="evidence at protein level"/>
<protein>
    <recommendedName>
        <fullName evidence="1">Transcription-repair-coupling factor</fullName>
        <shortName evidence="1">TRCF</shortName>
        <ecNumber evidence="1">3.6.4.-</ecNumber>
    </recommendedName>
</protein>
<dbReference type="EC" id="3.6.4.-" evidence="1"/>
<dbReference type="EMBL" id="U00096">
    <property type="protein sequence ID" value="AAC74198.1"/>
    <property type="molecule type" value="Genomic_DNA"/>
</dbReference>
<dbReference type="EMBL" id="AP009048">
    <property type="protein sequence ID" value="BAA35929.1"/>
    <property type="molecule type" value="Genomic_DNA"/>
</dbReference>
<dbReference type="PIR" id="G64855">
    <property type="entry name" value="G64855"/>
</dbReference>
<dbReference type="RefSeq" id="NP_415632.1">
    <property type="nucleotide sequence ID" value="NC_000913.3"/>
</dbReference>
<dbReference type="RefSeq" id="WP_001115094.1">
    <property type="nucleotide sequence ID" value="NZ_SSZK01000019.1"/>
</dbReference>
<dbReference type="PDB" id="2B2N">
    <property type="method" value="X-ray"/>
    <property type="resolution" value="2.10 A"/>
    <property type="chains" value="A/B=1-333"/>
</dbReference>
<dbReference type="PDB" id="2EYQ">
    <property type="method" value="X-ray"/>
    <property type="resolution" value="3.20 A"/>
    <property type="chains" value="A/B=1-1148"/>
</dbReference>
<dbReference type="PDB" id="3HJH">
    <property type="method" value="X-ray"/>
    <property type="resolution" value="1.95 A"/>
    <property type="chains" value="A=1-470"/>
</dbReference>
<dbReference type="PDB" id="4DFC">
    <property type="method" value="X-ray"/>
    <property type="resolution" value="2.80 A"/>
    <property type="chains" value="A/C=127-213"/>
</dbReference>
<dbReference type="PDB" id="6X26">
    <property type="method" value="EM"/>
    <property type="resolution" value="4.10 A"/>
    <property type="chains" value="A=1-1148"/>
</dbReference>
<dbReference type="PDB" id="6X2F">
    <property type="method" value="EM"/>
    <property type="resolution" value="4.00 A"/>
    <property type="chains" value="A=1-1148"/>
</dbReference>
<dbReference type="PDB" id="6X2N">
    <property type="method" value="EM"/>
    <property type="resolution" value="3.90 A"/>
    <property type="chains" value="A=1-1148"/>
</dbReference>
<dbReference type="PDB" id="6X43">
    <property type="method" value="EM"/>
    <property type="resolution" value="3.60 A"/>
    <property type="chains" value="A=1-1148"/>
</dbReference>
<dbReference type="PDB" id="6X4W">
    <property type="method" value="EM"/>
    <property type="resolution" value="3.80 A"/>
    <property type="chains" value="A=1-1148"/>
</dbReference>
<dbReference type="PDB" id="6X4Y">
    <property type="method" value="EM"/>
    <property type="resolution" value="3.60 A"/>
    <property type="chains" value="A=1-1148"/>
</dbReference>
<dbReference type="PDB" id="6X50">
    <property type="method" value="EM"/>
    <property type="resolution" value="3.30 A"/>
    <property type="chains" value="A=1-1148"/>
</dbReference>
<dbReference type="PDB" id="6XEO">
    <property type="method" value="EM"/>
    <property type="resolution" value="5.50 A"/>
    <property type="chains" value="A=1-1148"/>
</dbReference>
<dbReference type="PDB" id="6YHZ">
    <property type="method" value="NMR"/>
    <property type="chains" value="A=472-547"/>
</dbReference>
<dbReference type="PDB" id="7SSG">
    <property type="method" value="EM"/>
    <property type="resolution" value="5.20 A"/>
    <property type="chains" value="A=1-1148"/>
</dbReference>
<dbReference type="PDBsum" id="2B2N"/>
<dbReference type="PDBsum" id="2EYQ"/>
<dbReference type="PDBsum" id="3HJH"/>
<dbReference type="PDBsum" id="4DFC"/>
<dbReference type="PDBsum" id="6X26"/>
<dbReference type="PDBsum" id="6X2F"/>
<dbReference type="PDBsum" id="6X2N"/>
<dbReference type="PDBsum" id="6X43"/>
<dbReference type="PDBsum" id="6X4W"/>
<dbReference type="PDBsum" id="6X4Y"/>
<dbReference type="PDBsum" id="6X50"/>
<dbReference type="PDBsum" id="6XEO"/>
<dbReference type="PDBsum" id="6YHZ"/>
<dbReference type="PDBsum" id="7SSG"/>
<dbReference type="EMDB" id="EMD-22146"/>
<dbReference type="EMDB" id="EMD-25408"/>
<dbReference type="SMR" id="P30958"/>
<dbReference type="BioGRID" id="4260086">
    <property type="interactions" value="174"/>
</dbReference>
<dbReference type="ComplexPortal" id="CPX-2155">
    <property type="entry name" value="TRCF-UvrA complex"/>
</dbReference>
<dbReference type="DIP" id="DIP-10199N"/>
<dbReference type="FunCoup" id="P30958">
    <property type="interactions" value="593"/>
</dbReference>
<dbReference type="IntAct" id="P30958">
    <property type="interactions" value="17"/>
</dbReference>
<dbReference type="STRING" id="511145.b1114"/>
<dbReference type="jPOST" id="P30958"/>
<dbReference type="PaxDb" id="511145-b1114"/>
<dbReference type="EnsemblBacteria" id="AAC74198">
    <property type="protein sequence ID" value="AAC74198"/>
    <property type="gene ID" value="b1114"/>
</dbReference>
<dbReference type="GeneID" id="75203700"/>
<dbReference type="GeneID" id="945681"/>
<dbReference type="KEGG" id="ecj:JW1100"/>
<dbReference type="KEGG" id="eco:b1114"/>
<dbReference type="KEGG" id="ecoc:C3026_06715"/>
<dbReference type="PATRIC" id="fig|511145.12.peg.1158"/>
<dbReference type="EchoBASE" id="EB1576"/>
<dbReference type="eggNOG" id="COG1197">
    <property type="taxonomic scope" value="Bacteria"/>
</dbReference>
<dbReference type="HOGENOM" id="CLU_005122_0_2_6"/>
<dbReference type="InParanoid" id="P30958"/>
<dbReference type="OMA" id="WAPPCRE"/>
<dbReference type="OrthoDB" id="9804325at2"/>
<dbReference type="PhylomeDB" id="P30958"/>
<dbReference type="BioCyc" id="EcoCyc:EG11619-MONOMER"/>
<dbReference type="EvolutionaryTrace" id="P30958"/>
<dbReference type="PRO" id="PR:P30958"/>
<dbReference type="Proteomes" id="UP000000625">
    <property type="component" value="Chromosome"/>
</dbReference>
<dbReference type="GO" id="GO:0005829">
    <property type="term" value="C:cytosol"/>
    <property type="evidence" value="ECO:0000314"/>
    <property type="project" value="EcoCyc"/>
</dbReference>
<dbReference type="GO" id="GO:1990391">
    <property type="term" value="C:DNA repair complex"/>
    <property type="evidence" value="ECO:0000353"/>
    <property type="project" value="ComplexPortal"/>
</dbReference>
<dbReference type="GO" id="GO:0005524">
    <property type="term" value="F:ATP binding"/>
    <property type="evidence" value="ECO:0007669"/>
    <property type="project" value="UniProtKB-UniRule"/>
</dbReference>
<dbReference type="GO" id="GO:0003684">
    <property type="term" value="F:damaged DNA binding"/>
    <property type="evidence" value="ECO:0007669"/>
    <property type="project" value="InterPro"/>
</dbReference>
<dbReference type="GO" id="GO:0003677">
    <property type="term" value="F:DNA binding"/>
    <property type="evidence" value="ECO:0000314"/>
    <property type="project" value="EcoCyc"/>
</dbReference>
<dbReference type="GO" id="GO:0015616">
    <property type="term" value="F:DNA translocase activity"/>
    <property type="evidence" value="ECO:0000314"/>
    <property type="project" value="EcoCyc"/>
</dbReference>
<dbReference type="GO" id="GO:0016787">
    <property type="term" value="F:hydrolase activity"/>
    <property type="evidence" value="ECO:0007669"/>
    <property type="project" value="UniProtKB-KW"/>
</dbReference>
<dbReference type="GO" id="GO:0043175">
    <property type="term" value="F:RNA polymerase core enzyme binding"/>
    <property type="evidence" value="ECO:0000314"/>
    <property type="project" value="EcoCyc"/>
</dbReference>
<dbReference type="GO" id="GO:0006974">
    <property type="term" value="P:DNA damage response"/>
    <property type="evidence" value="ECO:0000314"/>
    <property type="project" value="EcoliWiki"/>
</dbReference>
<dbReference type="GO" id="GO:0006281">
    <property type="term" value="P:DNA repair"/>
    <property type="evidence" value="ECO:0000315"/>
    <property type="project" value="EcoliWiki"/>
</dbReference>
<dbReference type="GO" id="GO:0006294">
    <property type="term" value="P:nucleotide-excision repair, preincision complex assembly"/>
    <property type="evidence" value="ECO:0000303"/>
    <property type="project" value="ComplexPortal"/>
</dbReference>
<dbReference type="GO" id="GO:0006355">
    <property type="term" value="P:regulation of DNA-templated transcription"/>
    <property type="evidence" value="ECO:0000314"/>
    <property type="project" value="EcoliWiki"/>
</dbReference>
<dbReference type="GO" id="GO:0006283">
    <property type="term" value="P:transcription-coupled nucleotide-excision repair"/>
    <property type="evidence" value="ECO:0000314"/>
    <property type="project" value="EcoCyc"/>
</dbReference>
<dbReference type="GO" id="GO:0000716">
    <property type="term" value="P:transcription-coupled nucleotide-excision repair, DNA damage recognition"/>
    <property type="evidence" value="ECO:0000314"/>
    <property type="project" value="EcoliWiki"/>
</dbReference>
<dbReference type="CDD" id="cd17991">
    <property type="entry name" value="DEXHc_TRCF"/>
    <property type="match status" value="1"/>
</dbReference>
<dbReference type="CDD" id="cd18810">
    <property type="entry name" value="SF2_C_TRCF"/>
    <property type="match status" value="1"/>
</dbReference>
<dbReference type="FunFam" id="2.40.10.170:FF:000007">
    <property type="entry name" value="Transcription-repair-coupling factor"/>
    <property type="match status" value="1"/>
</dbReference>
<dbReference type="FunFam" id="3.30.2060.10:FF:000002">
    <property type="entry name" value="Transcription-repair-coupling factor"/>
    <property type="match status" value="1"/>
</dbReference>
<dbReference type="FunFam" id="3.40.50.11140:FF:000001">
    <property type="entry name" value="Transcription-repair-coupling factor"/>
    <property type="match status" value="1"/>
</dbReference>
<dbReference type="FunFam" id="3.40.50.300:FF:000300">
    <property type="entry name" value="Transcription-repair-coupling factor"/>
    <property type="match status" value="1"/>
</dbReference>
<dbReference type="FunFam" id="3.40.50.300:FF:000546">
    <property type="entry name" value="Transcription-repair-coupling factor"/>
    <property type="match status" value="1"/>
</dbReference>
<dbReference type="FunFam" id="3.90.1150.50:FF:000001">
    <property type="entry name" value="Transcription-repair-coupling factor"/>
    <property type="match status" value="1"/>
</dbReference>
<dbReference type="Gene3D" id="2.40.10.170">
    <property type="match status" value="1"/>
</dbReference>
<dbReference type="Gene3D" id="3.40.50.11140">
    <property type="match status" value="1"/>
</dbReference>
<dbReference type="Gene3D" id="3.40.50.11180">
    <property type="match status" value="1"/>
</dbReference>
<dbReference type="Gene3D" id="3.40.50.300">
    <property type="entry name" value="P-loop containing nucleotide triphosphate hydrolases"/>
    <property type="match status" value="2"/>
</dbReference>
<dbReference type="Gene3D" id="3.30.2060.10">
    <property type="entry name" value="Penicillin-binding protein 1b domain"/>
    <property type="match status" value="1"/>
</dbReference>
<dbReference type="Gene3D" id="3.90.1150.50">
    <property type="entry name" value="Transcription-repair-coupling factor, D7 domain"/>
    <property type="match status" value="1"/>
</dbReference>
<dbReference type="HAMAP" id="MF_00969">
    <property type="entry name" value="TRCF"/>
    <property type="match status" value="1"/>
</dbReference>
<dbReference type="InterPro" id="IPR003711">
    <property type="entry name" value="CarD-like/TRCF_RID"/>
</dbReference>
<dbReference type="InterPro" id="IPR036101">
    <property type="entry name" value="CarD-like/TRCF_RID_sf"/>
</dbReference>
<dbReference type="InterPro" id="IPR011545">
    <property type="entry name" value="DEAD/DEAH_box_helicase_dom"/>
</dbReference>
<dbReference type="InterPro" id="IPR014001">
    <property type="entry name" value="Helicase_ATP-bd"/>
</dbReference>
<dbReference type="InterPro" id="IPR001650">
    <property type="entry name" value="Helicase_C-like"/>
</dbReference>
<dbReference type="InterPro" id="IPR004576">
    <property type="entry name" value="Mfd"/>
</dbReference>
<dbReference type="InterPro" id="IPR048635">
    <property type="entry name" value="MFD_D3"/>
</dbReference>
<dbReference type="InterPro" id="IPR027417">
    <property type="entry name" value="P-loop_NTPase"/>
</dbReference>
<dbReference type="InterPro" id="IPR047112">
    <property type="entry name" value="RecG/Mfd"/>
</dbReference>
<dbReference type="InterPro" id="IPR037235">
    <property type="entry name" value="TRCF-like_C_D7"/>
</dbReference>
<dbReference type="InterPro" id="IPR005118">
    <property type="entry name" value="TRCF_C"/>
</dbReference>
<dbReference type="InterPro" id="IPR041471">
    <property type="entry name" value="UvrB_inter"/>
</dbReference>
<dbReference type="NCBIfam" id="TIGR00580">
    <property type="entry name" value="mfd"/>
    <property type="match status" value="1"/>
</dbReference>
<dbReference type="NCBIfam" id="NF007966">
    <property type="entry name" value="PRK10689.1"/>
    <property type="match status" value="1"/>
</dbReference>
<dbReference type="PANTHER" id="PTHR47964">
    <property type="entry name" value="ATP-DEPENDENT DNA HELICASE HOMOLOG RECG, CHLOROPLASTIC"/>
    <property type="match status" value="1"/>
</dbReference>
<dbReference type="PANTHER" id="PTHR47964:SF1">
    <property type="entry name" value="ATP-DEPENDENT DNA HELICASE HOMOLOG RECG, CHLOROPLASTIC"/>
    <property type="match status" value="1"/>
</dbReference>
<dbReference type="Pfam" id="PF02559">
    <property type="entry name" value="CarD_TRCF_RID"/>
    <property type="match status" value="1"/>
</dbReference>
<dbReference type="Pfam" id="PF00270">
    <property type="entry name" value="DEAD"/>
    <property type="match status" value="1"/>
</dbReference>
<dbReference type="Pfam" id="PF00271">
    <property type="entry name" value="Helicase_C"/>
    <property type="match status" value="1"/>
</dbReference>
<dbReference type="Pfam" id="PF21132">
    <property type="entry name" value="MFD_D3"/>
    <property type="match status" value="1"/>
</dbReference>
<dbReference type="Pfam" id="PF03461">
    <property type="entry name" value="TRCF"/>
    <property type="match status" value="1"/>
</dbReference>
<dbReference type="Pfam" id="PF17757">
    <property type="entry name" value="UvrB_inter"/>
    <property type="match status" value="1"/>
</dbReference>
<dbReference type="SMART" id="SM01058">
    <property type="entry name" value="CarD_TRCF"/>
    <property type="match status" value="1"/>
</dbReference>
<dbReference type="SMART" id="SM00487">
    <property type="entry name" value="DEXDc"/>
    <property type="match status" value="1"/>
</dbReference>
<dbReference type="SMART" id="SM00490">
    <property type="entry name" value="HELICc"/>
    <property type="match status" value="1"/>
</dbReference>
<dbReference type="SMART" id="SM00982">
    <property type="entry name" value="TRCF"/>
    <property type="match status" value="1"/>
</dbReference>
<dbReference type="SUPFAM" id="SSF141259">
    <property type="entry name" value="CarD-like"/>
    <property type="match status" value="1"/>
</dbReference>
<dbReference type="SUPFAM" id="SSF52540">
    <property type="entry name" value="P-loop containing nucleoside triphosphate hydrolases"/>
    <property type="match status" value="4"/>
</dbReference>
<dbReference type="SUPFAM" id="SSF143517">
    <property type="entry name" value="TRCF domain-like"/>
    <property type="match status" value="1"/>
</dbReference>
<dbReference type="PROSITE" id="PS51192">
    <property type="entry name" value="HELICASE_ATP_BIND_1"/>
    <property type="match status" value="1"/>
</dbReference>
<dbReference type="PROSITE" id="PS51194">
    <property type="entry name" value="HELICASE_CTER"/>
    <property type="match status" value="1"/>
</dbReference>
<comment type="function">
    <text evidence="1 2 5 7 8 9">Couples transcription and DNA repair by recognizing RNA polymerase (RNAP) stalled at DNA lesions. Mediates ATP-dependent release of RNAP and its truncated transcript from the DNA, and recruitment of nucleotide excision repair machinery to the damaged site. Can also dissociate RNAP that is blocked by low concentration of nucleoside triphosphates or by physical obstruction, such as bound proteins. In addition, can rescue arrested complexes by promoting forward translocation. Has ATPase activity, which is required for removal of stalled RNAP, but seems to lack helicase activity. May act through a translocase activity that rewinds upstream DNA, leading either to translocation or to release of RNAP when the enzyme active site cannot continue elongation.</text>
</comment>
<comment type="subunit">
    <text evidence="2 6 7 9">Monomer. Interacts with UvrA and RNAP.</text>
</comment>
<comment type="interaction">
    <interactant intactId="EBI-554211">
        <id>P30958</id>
    </interactant>
    <interactant intactId="EBI-552091">
        <id>P0A698</id>
        <label>uvrA</label>
    </interactant>
    <organismsDiffer>false</organismsDiffer>
    <experiments>2</experiments>
</comment>
<comment type="subcellular location">
    <subcellularLocation>
        <location evidence="1">Cytoplasm</location>
    </subcellularLocation>
</comment>
<comment type="domain">
    <text evidence="3 4 5 6 7">Consists of a compact arrangement of structured domains linked by long, flexible linkers. The N-terminal region interacts with UvrA, the central region interacts with RNAP, and the C-terminal DNA translocase region possesses ATPase activity. Activity is regulated by a conformational switch from a dormant closed state to an active open state upon substrate binding.</text>
</comment>
<comment type="similarity">
    <text evidence="1">In the N-terminal section; belongs to the UvrB family.</text>
</comment>
<comment type="similarity">
    <text evidence="1">In the C-terminal section; belongs to the helicase family. RecG subfamily.</text>
</comment>
<feature type="chain" id="PRO_0000102166" description="Transcription-repair-coupling factor">
    <location>
        <begin position="1"/>
        <end position="1148"/>
    </location>
</feature>
<feature type="domain" description="Helicase ATP-binding" evidence="1">
    <location>
        <begin position="615"/>
        <end position="776"/>
    </location>
</feature>
<feature type="domain" description="Helicase C-terminal" evidence="1">
    <location>
        <begin position="798"/>
        <end position="951"/>
    </location>
</feature>
<feature type="short sequence motif" description="DEEH box">
    <location>
        <begin position="729"/>
        <end position="732"/>
    </location>
</feature>
<feature type="binding site" evidence="1">
    <location>
        <begin position="628"/>
        <end position="635"/>
    </location>
    <ligand>
        <name>ATP</name>
        <dbReference type="ChEBI" id="CHEBI:30616"/>
    </ligand>
</feature>
<feature type="sequence conflict" description="In Ref. 1." evidence="10" ref="1">
    <original>A</original>
    <variation>R</variation>
    <location>
        <position position="365"/>
    </location>
</feature>
<feature type="strand" evidence="15">
    <location>
        <begin position="12"/>
        <end position="14"/>
    </location>
</feature>
<feature type="strand" evidence="13">
    <location>
        <begin position="16"/>
        <end position="20"/>
    </location>
</feature>
<feature type="helix" evidence="13">
    <location>
        <begin position="26"/>
        <end position="37"/>
    </location>
</feature>
<feature type="strand" evidence="13">
    <location>
        <begin position="38"/>
        <end position="40"/>
    </location>
</feature>
<feature type="strand" evidence="13">
    <location>
        <begin position="42"/>
        <end position="48"/>
    </location>
</feature>
<feature type="helix" evidence="13">
    <location>
        <begin position="49"/>
        <end position="61"/>
    </location>
</feature>
<feature type="strand" evidence="13">
    <location>
        <begin position="67"/>
        <end position="69"/>
    </location>
</feature>
<feature type="helix" evidence="13">
    <location>
        <begin position="85"/>
        <end position="97"/>
    </location>
</feature>
<feature type="helix" evidence="13">
    <location>
        <begin position="98"/>
        <end position="100"/>
    </location>
</feature>
<feature type="strand" evidence="13">
    <location>
        <begin position="103"/>
        <end position="109"/>
    </location>
</feature>
<feature type="helix" evidence="13">
    <location>
        <begin position="110"/>
        <end position="114"/>
    </location>
</feature>
<feature type="helix" evidence="13">
    <location>
        <begin position="120"/>
        <end position="125"/>
    </location>
</feature>
<feature type="strand" evidence="13">
    <location>
        <begin position="128"/>
        <end position="131"/>
    </location>
</feature>
<feature type="helix" evidence="13">
    <location>
        <begin position="138"/>
        <end position="147"/>
    </location>
</feature>
<feature type="strand" evidence="14">
    <location>
        <begin position="151"/>
        <end position="155"/>
    </location>
</feature>
<feature type="strand" evidence="13">
    <location>
        <begin position="161"/>
        <end position="165"/>
    </location>
</feature>
<feature type="strand" evidence="13">
    <location>
        <begin position="168"/>
        <end position="171"/>
    </location>
</feature>
<feature type="strand" evidence="15">
    <location>
        <begin position="174"/>
        <end position="178"/>
    </location>
</feature>
<feature type="strand" evidence="13">
    <location>
        <begin position="180"/>
        <end position="185"/>
    </location>
</feature>
<feature type="strand" evidence="13">
    <location>
        <begin position="188"/>
        <end position="196"/>
    </location>
</feature>
<feature type="turn" evidence="13">
    <location>
        <begin position="197"/>
        <end position="200"/>
    </location>
</feature>
<feature type="strand" evidence="13">
    <location>
        <begin position="201"/>
        <end position="212"/>
    </location>
</feature>
<feature type="strand" evidence="13">
    <location>
        <begin position="214"/>
        <end position="217"/>
    </location>
</feature>
<feature type="helix" evidence="13">
    <location>
        <begin position="221"/>
        <end position="234"/>
    </location>
</feature>
<feature type="helix" evidence="13">
    <location>
        <begin position="244"/>
        <end position="249"/>
    </location>
</feature>
<feature type="helix" evidence="13">
    <location>
        <begin position="257"/>
        <end position="264"/>
    </location>
</feature>
<feature type="strand" evidence="11">
    <location>
        <begin position="265"/>
        <end position="267"/>
    </location>
</feature>
<feature type="helix" evidence="13">
    <location>
        <begin position="272"/>
        <end position="275"/>
    </location>
</feature>
<feature type="strand" evidence="13">
    <location>
        <begin position="281"/>
        <end position="284"/>
    </location>
</feature>
<feature type="helix" evidence="13">
    <location>
        <begin position="288"/>
        <end position="306"/>
    </location>
</feature>
<feature type="strand" evidence="15">
    <location>
        <begin position="310"/>
        <end position="312"/>
    </location>
</feature>
<feature type="helix" evidence="13">
    <location>
        <begin position="317"/>
        <end position="319"/>
    </location>
</feature>
<feature type="helix" evidence="13">
    <location>
        <begin position="324"/>
        <end position="331"/>
    </location>
</feature>
<feature type="strand" evidence="13">
    <location>
        <begin position="336"/>
        <end position="339"/>
    </location>
</feature>
<feature type="strand" evidence="13">
    <location>
        <begin position="350"/>
        <end position="352"/>
    </location>
</feature>
<feature type="strand" evidence="13">
    <location>
        <begin position="366"/>
        <end position="369"/>
    </location>
</feature>
<feature type="helix" evidence="13">
    <location>
        <begin position="372"/>
        <end position="380"/>
    </location>
</feature>
<feature type="strand" evidence="13">
    <location>
        <begin position="385"/>
        <end position="390"/>
    </location>
</feature>
<feature type="turn" evidence="13">
    <location>
        <begin position="394"/>
        <end position="398"/>
    </location>
</feature>
<feature type="helix" evidence="13">
    <location>
        <begin position="399"/>
        <end position="402"/>
    </location>
</feature>
<feature type="helix" evidence="13">
    <location>
        <begin position="403"/>
        <end position="405"/>
    </location>
</feature>
<feature type="helix" evidence="13">
    <location>
        <begin position="415"/>
        <end position="417"/>
    </location>
</feature>
<feature type="strand" evidence="13">
    <location>
        <begin position="423"/>
        <end position="428"/>
    </location>
</feature>
<feature type="strand" evidence="13">
    <location>
        <begin position="434"/>
        <end position="436"/>
    </location>
</feature>
<feature type="turn" evidence="13">
    <location>
        <begin position="437"/>
        <end position="440"/>
    </location>
</feature>
<feature type="strand" evidence="13">
    <location>
        <begin position="441"/>
        <end position="445"/>
    </location>
</feature>
<feature type="helix" evidence="13">
    <location>
        <begin position="446"/>
        <end position="449"/>
    </location>
</feature>
<feature type="helix" evidence="12">
    <location>
        <begin position="461"/>
        <end position="463"/>
    </location>
</feature>
<feature type="helix" evidence="12">
    <location>
        <begin position="467"/>
        <end position="472"/>
    </location>
</feature>
<feature type="strand" evidence="12">
    <location>
        <begin position="482"/>
        <end position="485"/>
    </location>
</feature>
<feature type="turn" evidence="12">
    <location>
        <begin position="486"/>
        <end position="488"/>
    </location>
</feature>
<feature type="strand" evidence="12">
    <location>
        <begin position="489"/>
        <end position="503"/>
    </location>
</feature>
<feature type="strand" evidence="12">
    <location>
        <begin position="505"/>
        <end position="512"/>
    </location>
</feature>
<feature type="helix" evidence="12">
    <location>
        <begin position="514"/>
        <end position="516"/>
    </location>
</feature>
<feature type="strand" evidence="12">
    <location>
        <begin position="518"/>
        <end position="522"/>
    </location>
</feature>
<feature type="helix" evidence="12">
    <location>
        <begin position="523"/>
        <end position="528"/>
    </location>
</feature>
<feature type="strand" evidence="12">
    <location>
        <begin position="529"/>
        <end position="531"/>
    </location>
</feature>
<feature type="strand" evidence="12">
    <location>
        <begin position="537"/>
        <end position="539"/>
    </location>
</feature>
<feature type="helix" evidence="12">
    <location>
        <begin position="549"/>
        <end position="576"/>
    </location>
</feature>
<feature type="helix" evidence="12">
    <location>
        <begin position="587"/>
        <end position="595"/>
    </location>
</feature>
<feature type="helix" evidence="12">
    <location>
        <begin position="603"/>
        <end position="617"/>
    </location>
</feature>
<feature type="strand" evidence="12">
    <location>
        <begin position="618"/>
        <end position="620"/>
    </location>
</feature>
<feature type="strand" evidence="12">
    <location>
        <begin position="623"/>
        <end position="627"/>
    </location>
</feature>
<feature type="turn" evidence="12">
    <location>
        <begin position="632"/>
        <end position="635"/>
    </location>
</feature>
<feature type="helix" evidence="12">
    <location>
        <begin position="636"/>
        <end position="646"/>
    </location>
</feature>
<feature type="turn" evidence="12">
    <location>
        <begin position="647"/>
        <end position="649"/>
    </location>
</feature>
<feature type="strand" evidence="12">
    <location>
        <begin position="651"/>
        <end position="655"/>
    </location>
</feature>
<feature type="helix" evidence="12">
    <location>
        <begin position="659"/>
        <end position="672"/>
    </location>
</feature>
<feature type="turn" evidence="12">
    <location>
        <begin position="674"/>
        <end position="677"/>
    </location>
</feature>
<feature type="strand" evidence="12">
    <location>
        <begin position="680"/>
        <end position="684"/>
    </location>
</feature>
<feature type="helix" evidence="12">
    <location>
        <begin position="689"/>
        <end position="700"/>
    </location>
</feature>
<feature type="strand" evidence="12">
    <location>
        <begin position="705"/>
        <end position="709"/>
    </location>
</feature>
<feature type="helix" evidence="12">
    <location>
        <begin position="712"/>
        <end position="715"/>
    </location>
</feature>
<feature type="strand" evidence="12">
    <location>
        <begin position="721"/>
        <end position="730"/>
    </location>
</feature>
<feature type="helix" evidence="12">
    <location>
        <begin position="731"/>
        <end position="733"/>
    </location>
</feature>
<feature type="helix" evidence="12">
    <location>
        <begin position="736"/>
        <end position="746"/>
    </location>
</feature>
<feature type="strand" evidence="12">
    <location>
        <begin position="749"/>
        <end position="757"/>
    </location>
</feature>
<feature type="helix" evidence="12">
    <location>
        <begin position="761"/>
        <end position="767"/>
    </location>
</feature>
<feature type="turn" evidence="12">
    <location>
        <begin position="768"/>
        <end position="770"/>
    </location>
</feature>
<feature type="strand" evidence="12">
    <location>
        <begin position="771"/>
        <end position="775"/>
    </location>
</feature>
<feature type="strand" evidence="12">
    <location>
        <begin position="786"/>
        <end position="792"/>
    </location>
</feature>
<feature type="helix" evidence="12">
    <location>
        <begin position="795"/>
        <end position="806"/>
    </location>
</feature>
<feature type="turn" evidence="12">
    <location>
        <begin position="807"/>
        <end position="809"/>
    </location>
</feature>
<feature type="strand" evidence="12">
    <location>
        <begin position="811"/>
        <end position="815"/>
    </location>
</feature>
<feature type="helix" evidence="12">
    <location>
        <begin position="822"/>
        <end position="832"/>
    </location>
</feature>
<feature type="strand" evidence="12">
    <location>
        <begin position="838"/>
        <end position="840"/>
    </location>
</feature>
<feature type="helix" evidence="12">
    <location>
        <begin position="847"/>
        <end position="858"/>
    </location>
</feature>
<feature type="strand" evidence="12">
    <location>
        <begin position="864"/>
        <end position="869"/>
    </location>
</feature>
<feature type="helix" evidence="12">
    <location>
        <begin position="872"/>
        <end position="874"/>
    </location>
</feature>
<feature type="strand" evidence="12">
    <location>
        <begin position="880"/>
        <end position="885"/>
    </location>
</feature>
<feature type="turn" evidence="12">
    <location>
        <begin position="886"/>
        <end position="889"/>
    </location>
</feature>
<feature type="helix" evidence="12">
    <location>
        <begin position="893"/>
        <end position="900"/>
    </location>
</feature>
<feature type="strand" evidence="15">
    <location>
        <begin position="905"/>
        <end position="908"/>
    </location>
</feature>
<feature type="strand" evidence="12">
    <location>
        <begin position="910"/>
        <end position="916"/>
    </location>
</feature>
<feature type="helix" evidence="12">
    <location>
        <begin position="919"/>
        <end position="921"/>
    </location>
</feature>
<feature type="helix" evidence="12">
    <location>
        <begin position="924"/>
        <end position="933"/>
    </location>
</feature>
<feature type="strand" evidence="12">
    <location>
        <begin position="938"/>
        <end position="940"/>
    </location>
</feature>
<feature type="helix" evidence="12">
    <location>
        <begin position="941"/>
        <end position="959"/>
    </location>
</feature>
<feature type="helix" evidence="12">
    <location>
        <begin position="961"/>
        <end position="970"/>
    </location>
</feature>
<feature type="helix" evidence="12">
    <location>
        <begin position="972"/>
        <end position="988"/>
    </location>
</feature>
<feature type="helix" evidence="12">
    <location>
        <begin position="995"/>
        <end position="997"/>
    </location>
</feature>
<feature type="turn" evidence="12">
    <location>
        <begin position="1014"/>
        <end position="1016"/>
    </location>
</feature>
<feature type="helix" evidence="12">
    <location>
        <begin position="1020"/>
        <end position="1032"/>
    </location>
</feature>
<feature type="helix" evidence="12">
    <location>
        <begin position="1036"/>
        <end position="1050"/>
    </location>
</feature>
<feature type="helix" evidence="12">
    <location>
        <begin position="1055"/>
        <end position="1073"/>
    </location>
</feature>
<feature type="strand" evidence="12">
    <location>
        <begin position="1078"/>
        <end position="1080"/>
    </location>
</feature>
<feature type="strand" evidence="12">
    <location>
        <begin position="1082"/>
        <end position="1088"/>
    </location>
</feature>
<feature type="helix" evidence="12">
    <location>
        <begin position="1097"/>
        <end position="1106"/>
    </location>
</feature>
<feature type="helix" evidence="12">
    <location>
        <begin position="1108"/>
        <end position="1110"/>
    </location>
</feature>
<feature type="strand" evidence="12">
    <location>
        <begin position="1111"/>
        <end position="1114"/>
    </location>
</feature>
<feature type="turn" evidence="12">
    <location>
        <begin position="1115"/>
        <end position="1117"/>
    </location>
</feature>
<feature type="strand" evidence="12">
    <location>
        <begin position="1118"/>
        <end position="1122"/>
    </location>
</feature>
<feature type="helix" evidence="12">
    <location>
        <begin position="1128"/>
        <end position="1143"/>
    </location>
</feature>
<reference key="1">
    <citation type="journal article" date="1993" name="Science">
        <title>Molecular mechanism of transcription-repair-coupling.</title>
        <authorList>
            <person name="Selby C.P."/>
            <person name="Sancar A."/>
        </authorList>
    </citation>
    <scope>NUCLEOTIDE SEQUENCE [GENOMIC DNA]</scope>
    <scope>FUNCTION</scope>
    <scope>SUBUNIT</scope>
    <scope>DNA-BINDING</scope>
</reference>
<reference key="2">
    <citation type="journal article" date="1996" name="DNA Res.">
        <title>A 718-kb DNA sequence of the Escherichia coli K-12 genome corresponding to the 12.7-28.0 min region on the linkage map.</title>
        <authorList>
            <person name="Oshima T."/>
            <person name="Aiba H."/>
            <person name="Baba T."/>
            <person name="Fujita K."/>
            <person name="Hayashi K."/>
            <person name="Honjo A."/>
            <person name="Ikemoto K."/>
            <person name="Inada T."/>
            <person name="Itoh T."/>
            <person name="Kajihara M."/>
            <person name="Kanai K."/>
            <person name="Kashimoto K."/>
            <person name="Kimura S."/>
            <person name="Kitagawa M."/>
            <person name="Makino K."/>
            <person name="Masuda S."/>
            <person name="Miki T."/>
            <person name="Mizobuchi K."/>
            <person name="Mori H."/>
            <person name="Motomura K."/>
            <person name="Nakamura Y."/>
            <person name="Nashimoto H."/>
            <person name="Nishio Y."/>
            <person name="Saito N."/>
            <person name="Sampei G."/>
            <person name="Seki Y."/>
            <person name="Tagami H."/>
            <person name="Takemoto K."/>
            <person name="Wada C."/>
            <person name="Yamamoto Y."/>
            <person name="Yano M."/>
            <person name="Horiuchi T."/>
        </authorList>
    </citation>
    <scope>NUCLEOTIDE SEQUENCE [LARGE SCALE GENOMIC DNA]</scope>
    <source>
        <strain>K12 / W3110 / ATCC 27325 / DSM 5911</strain>
    </source>
</reference>
<reference key="3">
    <citation type="journal article" date="1997" name="Science">
        <title>The complete genome sequence of Escherichia coli K-12.</title>
        <authorList>
            <person name="Blattner F.R."/>
            <person name="Plunkett G. III"/>
            <person name="Bloch C.A."/>
            <person name="Perna N.T."/>
            <person name="Burland V."/>
            <person name="Riley M."/>
            <person name="Collado-Vides J."/>
            <person name="Glasner J.D."/>
            <person name="Rode C.K."/>
            <person name="Mayhew G.F."/>
            <person name="Gregor J."/>
            <person name="Davis N.W."/>
            <person name="Kirkpatrick H.A."/>
            <person name="Goeden M.A."/>
            <person name="Rose D.J."/>
            <person name="Mau B."/>
            <person name="Shao Y."/>
        </authorList>
    </citation>
    <scope>NUCLEOTIDE SEQUENCE [LARGE SCALE GENOMIC DNA]</scope>
    <source>
        <strain>K12 / MG1655 / ATCC 47076</strain>
    </source>
</reference>
<reference key="4">
    <citation type="journal article" date="2006" name="Mol. Syst. Biol.">
        <title>Highly accurate genome sequences of Escherichia coli K-12 strains MG1655 and W3110.</title>
        <authorList>
            <person name="Hayashi K."/>
            <person name="Morooka N."/>
            <person name="Yamamoto Y."/>
            <person name="Fujita K."/>
            <person name="Isono K."/>
            <person name="Choi S."/>
            <person name="Ohtsubo E."/>
            <person name="Baba T."/>
            <person name="Wanner B.L."/>
            <person name="Mori H."/>
            <person name="Horiuchi T."/>
        </authorList>
    </citation>
    <scope>NUCLEOTIDE SEQUENCE [LARGE SCALE GENOMIC DNA]</scope>
    <source>
        <strain>K12 / W3110 / ATCC 27325 / DSM 5911</strain>
    </source>
</reference>
<reference key="5">
    <citation type="journal article" date="1995" name="J. Biol. Chem.">
        <title>Structure and function of transcription-repair coupling factor. I. Structural domains and binding properties.</title>
        <authorList>
            <person name="Selby C.P."/>
            <person name="Sancar A."/>
        </authorList>
    </citation>
    <scope>FUNCTION</scope>
    <scope>DNA-BINDING</scope>
    <scope>INTERACTION WITH UVRA AND RNAP</scope>
    <scope>DOMAIN</scope>
</reference>
<reference key="6">
    <citation type="journal article" date="1995" name="J. Biol. Chem.">
        <title>Structure and function of transcription-repair coupling factor. II. Catalytic properties.</title>
        <authorList>
            <person name="Selby C.P."/>
            <person name="Sancar A."/>
        </authorList>
    </citation>
    <scope>FUNCTION</scope>
    <scope>LACK OF HELICASE ACTIVITY</scope>
</reference>
<reference key="7">
    <citation type="journal article" date="2002" name="Cell">
        <title>E. coli transcription repair coupling factor (Mfd protein) rescues arrested complexes by promoting forward translocation.</title>
        <authorList>
            <person name="Park J.S."/>
            <person name="Marr M.T."/>
            <person name="Roberts J.W."/>
        </authorList>
    </citation>
    <scope>FUNCTION</scope>
    <scope>INTERACTION WITH RNAP</scope>
</reference>
<reference key="8">
    <citation type="journal article" date="2005" name="Acta Crystallogr. F">
        <title>Crystallization and preliminary structure determination of Escherichia coli Mfd, the transcription-repair coupling factor.</title>
        <authorList>
            <person name="Deaconescu A.M."/>
            <person name="Darst S.A."/>
        </authorList>
    </citation>
    <scope>CRYSTALLIZATION</scope>
</reference>
<reference key="9">
    <citation type="journal article" date="2006" name="Cell">
        <title>Structural basis for bacterial transcription-coupled DNA repair.</title>
        <authorList>
            <person name="Deaconescu A.M."/>
            <person name="Chambers A.L."/>
            <person name="Smith A.J."/>
            <person name="Nickels B.E."/>
            <person name="Hochschild A."/>
            <person name="Savery N.J."/>
            <person name="Darst S.A."/>
        </authorList>
    </citation>
    <scope>X-RAY CRYSTALLOGRAPHY (3.20 ANGSTROMS)</scope>
    <scope>DOMAIN</scope>
</reference>
<reference key="10">
    <citation type="journal article" date="2006" name="J. Mol. Biol.">
        <title>Structural basis for transcription-coupled repair: the N terminus of Mfd resembles UvrB with degenerate ATPase motifs.</title>
        <authorList>
            <person name="Assenmacher N."/>
            <person name="Wenig K."/>
            <person name="Lammens A."/>
            <person name="Hopfner K.P."/>
        </authorList>
    </citation>
    <scope>X-RAY CRYSTALLOGRAPHY (2.10 ANGSTROMS) OF 1-333</scope>
    <scope>DOMAIN</scope>
</reference>
<reference key="11">
    <citation type="journal article" date="2009" name="Nucleic Acids Res.">
        <title>An N-terminal clamp restrains the motor domains of the bacterial transcription-repair coupling factor Mfd.</title>
        <authorList>
            <person name="Murphy M.N."/>
            <person name="Gong P."/>
            <person name="Ralto K."/>
            <person name="Manelyte L."/>
            <person name="Savery N.J."/>
            <person name="Theis K."/>
        </authorList>
    </citation>
    <scope>X-RAY CRYSTALLOGRAPHY (1.95 ANGSTROMS) OF 1-470</scope>
    <scope>FUNCTION</scope>
    <scope>DOMAIN</scope>
</reference>
<reference key="12">
    <citation type="journal article" date="2012" name="Proc. Natl. Acad. Sci. U.S.A.">
        <title>Nucleotide excision repair (NER) machinery recruitment by the transcription-repair coupling factor involves unmasking of a conserved intramolecular interface.</title>
        <authorList>
            <person name="Deaconescu A.M."/>
            <person name="Sevostyanova A."/>
            <person name="Artsimovitch I."/>
            <person name="Grigorieff N."/>
        </authorList>
    </citation>
    <scope>X-RAY CRYSTALLOGRAPHY (2.80 ANGSTROMS) OF 127-213 IN COMPLEX WITH UVRA</scope>
    <scope>DOMAIN</scope>
</reference>
<keyword id="KW-0002">3D-structure</keyword>
<keyword id="KW-0067">ATP-binding</keyword>
<keyword id="KW-0963">Cytoplasm</keyword>
<keyword id="KW-0227">DNA damage</keyword>
<keyword id="KW-0234">DNA repair</keyword>
<keyword id="KW-0238">DNA-binding</keyword>
<keyword id="KW-0347">Helicase</keyword>
<keyword id="KW-0378">Hydrolase</keyword>
<keyword id="KW-0547">Nucleotide-binding</keyword>
<keyword id="KW-1185">Reference proteome</keyword>